<accession>Q4JB70</accession>
<dbReference type="EMBL" id="CP000077">
    <property type="protein sequence ID" value="AAY79959.1"/>
    <property type="molecule type" value="Genomic_DNA"/>
</dbReference>
<dbReference type="RefSeq" id="WP_011277461.1">
    <property type="nucleotide sequence ID" value="NC_007181.1"/>
</dbReference>
<dbReference type="SMR" id="Q4JB70"/>
<dbReference type="STRING" id="330779.Saci_0567"/>
<dbReference type="TCDB" id="9.A.53.1.1">
    <property type="family name" value="the crenarchaeal system for exchange of dna (ced) family"/>
</dbReference>
<dbReference type="GeneID" id="41481392"/>
<dbReference type="KEGG" id="sai:Saci_0567"/>
<dbReference type="eggNOG" id="arCOG11039">
    <property type="taxonomic scope" value="Archaea"/>
</dbReference>
<dbReference type="HOGENOM" id="CLU_3075521_0_0_2"/>
<dbReference type="Proteomes" id="UP000001018">
    <property type="component" value="Chromosome"/>
</dbReference>
<dbReference type="GO" id="GO:0005886">
    <property type="term" value="C:plasma membrane"/>
    <property type="evidence" value="ECO:0007669"/>
    <property type="project" value="UniProtKB-SubCell"/>
</dbReference>
<dbReference type="NCBIfam" id="NF041798">
    <property type="entry name" value="Ced_CedA2"/>
    <property type="match status" value="1"/>
</dbReference>
<gene>
    <name evidence="3" type="primary">cedA2</name>
    <name evidence="5" type="ordered locus">Saci_0567</name>
</gene>
<organism>
    <name type="scientific">Sulfolobus acidocaldarius (strain ATCC 33909 / DSM 639 / JCM 8929 / NBRC 15157 / NCIMB 11770)</name>
    <dbReference type="NCBI Taxonomy" id="330779"/>
    <lineage>
        <taxon>Archaea</taxon>
        <taxon>Thermoproteota</taxon>
        <taxon>Thermoprotei</taxon>
        <taxon>Sulfolobales</taxon>
        <taxon>Sulfolobaceae</taxon>
        <taxon>Sulfolobus</taxon>
    </lineage>
</organism>
<name>CEDA2_SULAC</name>
<evidence type="ECO:0000255" key="1"/>
<evidence type="ECO:0000269" key="2">
    <source>
    </source>
</evidence>
<evidence type="ECO:0000303" key="3">
    <source>
    </source>
</evidence>
<evidence type="ECO:0000305" key="4"/>
<evidence type="ECO:0000312" key="5">
    <source>
        <dbReference type="EMBL" id="AAY79959.1"/>
    </source>
</evidence>
<keyword id="KW-1003">Cell membrane</keyword>
<keyword id="KW-0472">Membrane</keyword>
<keyword id="KW-1185">Reference proteome</keyword>
<keyword id="KW-0812">Transmembrane</keyword>
<keyword id="KW-1133">Transmembrane helix</keyword>
<keyword id="KW-0813">Transport</keyword>
<proteinExistence type="evidence at protein level"/>
<protein>
    <recommendedName>
        <fullName evidence="4">DNA import protein CedA2</fullName>
    </recommendedName>
    <alternativeName>
        <fullName evidence="3">Crenarchaeal system for exchange of DNA protein A2</fullName>
    </alternativeName>
</protein>
<feature type="chain" id="PRO_0000437447" description="DNA import protein CedA2">
    <location>
        <begin position="1"/>
        <end position="52"/>
    </location>
</feature>
<feature type="transmembrane region" description="Helical" evidence="1">
    <location>
        <begin position="1"/>
        <end position="21"/>
    </location>
</feature>
<feature type="transmembrane region" description="Helical" evidence="1">
    <location>
        <begin position="27"/>
        <end position="47"/>
    </location>
</feature>
<reference key="1">
    <citation type="journal article" date="2005" name="J. Bacteriol.">
        <title>The genome of Sulfolobus acidocaldarius, a model organism of the Crenarchaeota.</title>
        <authorList>
            <person name="Chen L."/>
            <person name="Bruegger K."/>
            <person name="Skovgaard M."/>
            <person name="Redder P."/>
            <person name="She Q."/>
            <person name="Torarinsson E."/>
            <person name="Greve B."/>
            <person name="Awayez M."/>
            <person name="Zibat A."/>
            <person name="Klenk H.-P."/>
            <person name="Garrett R.A."/>
        </authorList>
    </citation>
    <scope>NUCLEOTIDE SEQUENCE [LARGE SCALE GENOMIC DNA]</scope>
    <source>
        <strain>ATCC 33909 / DSM 639 / JCM 8929 / NBRC 15157 / NCIMB 11770</strain>
    </source>
</reference>
<reference key="2">
    <citation type="journal article" date="2016" name="Proc. Natl. Acad. Sci. U.S.A.">
        <title>The archaeal Ced system imports DNA.</title>
        <authorList>
            <person name="van Wolferen M."/>
            <person name="Wagner A."/>
            <person name="van der Does C."/>
            <person name="Albers S.V."/>
        </authorList>
    </citation>
    <scope>FUNCTION</scope>
    <scope>SUBUNIT</scope>
    <scope>SUBCELLULAR LOCATION</scope>
    <scope>INDUCTION</scope>
    <source>
        <strain>JDS22</strain>
        <strain>MW001</strain>
    </source>
</reference>
<sequence length="52" mass="6013">MKSYLLVSMLLLLNSILVYIYTKNVQILVSGITVAVIIYIVVKIIFERFVHQ</sequence>
<comment type="function">
    <text evidence="2">Part of the Ced system, which is involved in DNA import.</text>
</comment>
<comment type="subunit">
    <text evidence="2">Forms a complex composed of CedA, CedA1 and CedA2.</text>
</comment>
<comment type="subcellular location">
    <subcellularLocation>
        <location evidence="2">Cell membrane</location>
        <topology evidence="1">Multi-pass membrane protein</topology>
    </subcellularLocation>
</comment>
<comment type="induction">
    <text evidence="2">Up-regulated upon UV stress.</text>
</comment>